<reference key="1">
    <citation type="journal article" date="2011" name="PLoS Genet.">
        <title>Finished genome of the fungal wheat pathogen Mycosphaerella graminicola reveals dispensome structure, chromosome plasticity, and stealth pathogenesis.</title>
        <authorList>
            <person name="Goodwin S.B."/>
            <person name="Ben M'barek S."/>
            <person name="Dhillon B."/>
            <person name="Wittenberg A.H.J."/>
            <person name="Crane C.F."/>
            <person name="Hane J.K."/>
            <person name="Foster A.J."/>
            <person name="Van der Lee T.A.J."/>
            <person name="Grimwood J."/>
            <person name="Aerts A."/>
            <person name="Antoniw J."/>
            <person name="Bailey A."/>
            <person name="Bluhm B."/>
            <person name="Bowler J."/>
            <person name="Bristow J."/>
            <person name="van der Burgt A."/>
            <person name="Canto-Canche B."/>
            <person name="Churchill A.C.L."/>
            <person name="Conde-Ferraez L."/>
            <person name="Cools H.J."/>
            <person name="Coutinho P.M."/>
            <person name="Csukai M."/>
            <person name="Dehal P."/>
            <person name="De Wit P."/>
            <person name="Donzelli B."/>
            <person name="van de Geest H.C."/>
            <person name="van Ham R.C.H.J."/>
            <person name="Hammond-Kosack K.E."/>
            <person name="Henrissat B."/>
            <person name="Kilian A."/>
            <person name="Kobayashi A.K."/>
            <person name="Koopmann E."/>
            <person name="Kourmpetis Y."/>
            <person name="Kuzniar A."/>
            <person name="Lindquist E."/>
            <person name="Lombard V."/>
            <person name="Maliepaard C."/>
            <person name="Martins N."/>
            <person name="Mehrabi R."/>
            <person name="Nap J.P.H."/>
            <person name="Ponomarenko A."/>
            <person name="Rudd J.J."/>
            <person name="Salamov A."/>
            <person name="Schmutz J."/>
            <person name="Schouten H.J."/>
            <person name="Shapiro H."/>
            <person name="Stergiopoulos I."/>
            <person name="Torriani S.F.F."/>
            <person name="Tu H."/>
            <person name="de Vries R.P."/>
            <person name="Waalwijk C."/>
            <person name="Ware S.B."/>
            <person name="Wiebenga A."/>
            <person name="Zwiers L.-H."/>
            <person name="Oliver R.P."/>
            <person name="Grigoriev I.V."/>
            <person name="Kema G.H.J."/>
        </authorList>
    </citation>
    <scope>NUCLEOTIDE SEQUENCE [LARGE SCALE GENOMIC DNA]</scope>
    <source>
        <strain>CBS 115943 / IPO323</strain>
    </source>
</reference>
<reference key="2">
    <citation type="journal article" date="2017" name="BMC Genomics">
        <title>In silico prediction and characterization of secondary metabolite biosynthetic gene clusters in the wheat pathogen Zymoseptoria tritici.</title>
        <authorList>
            <person name="Cairns T."/>
            <person name="Meyer V."/>
        </authorList>
    </citation>
    <scope>IDENTIFICATION</scope>
    <scope>FUNCTION</scope>
</reference>
<accession>F9WWF1</accession>
<comment type="function">
    <text evidence="2">Geranylgeranyl pyrophosphate synthase; part of the gene cluster 3 that mediates the biosynthesis of an isoprenoid secondary metabolite.</text>
</comment>
<comment type="catalytic activity">
    <reaction evidence="1">
        <text>isopentenyl diphosphate + dimethylallyl diphosphate = (2E)-geranyl diphosphate + diphosphate</text>
        <dbReference type="Rhea" id="RHEA:22408"/>
        <dbReference type="ChEBI" id="CHEBI:33019"/>
        <dbReference type="ChEBI" id="CHEBI:57623"/>
        <dbReference type="ChEBI" id="CHEBI:58057"/>
        <dbReference type="ChEBI" id="CHEBI:128769"/>
        <dbReference type="EC" id="2.5.1.1"/>
    </reaction>
</comment>
<comment type="catalytic activity">
    <reaction evidence="1">
        <text>isopentenyl diphosphate + (2E)-geranyl diphosphate = (2E,6E)-farnesyl diphosphate + diphosphate</text>
        <dbReference type="Rhea" id="RHEA:19361"/>
        <dbReference type="ChEBI" id="CHEBI:33019"/>
        <dbReference type="ChEBI" id="CHEBI:58057"/>
        <dbReference type="ChEBI" id="CHEBI:128769"/>
        <dbReference type="ChEBI" id="CHEBI:175763"/>
        <dbReference type="EC" id="2.5.1.10"/>
    </reaction>
</comment>
<comment type="catalytic activity">
    <reaction evidence="1">
        <text>isopentenyl diphosphate + (2E,6E)-farnesyl diphosphate = (2E,6E,10E)-geranylgeranyl diphosphate + diphosphate</text>
        <dbReference type="Rhea" id="RHEA:17653"/>
        <dbReference type="ChEBI" id="CHEBI:33019"/>
        <dbReference type="ChEBI" id="CHEBI:58756"/>
        <dbReference type="ChEBI" id="CHEBI:128769"/>
        <dbReference type="ChEBI" id="CHEBI:175763"/>
        <dbReference type="EC" id="2.5.1.29"/>
    </reaction>
</comment>
<comment type="cofactor">
    <cofactor evidence="1">
        <name>Mg(2+)</name>
        <dbReference type="ChEBI" id="CHEBI:18420"/>
    </cofactor>
    <text evidence="1">Binds 3 Mg(2+) ions per subunit.</text>
</comment>
<comment type="similarity">
    <text evidence="4">Belongs to the FPP/GGPP synthase family.</text>
</comment>
<dbReference type="EC" id="2.5.1.-" evidence="5"/>
<dbReference type="EC" id="2.5.1.1" evidence="1"/>
<dbReference type="EC" id="2.5.1.29" evidence="1"/>
<dbReference type="EC" id="2.5.1.10" evidence="1"/>
<dbReference type="EMBL" id="CM001196">
    <property type="protein sequence ID" value="EGP91190.1"/>
    <property type="molecule type" value="Genomic_DNA"/>
</dbReference>
<dbReference type="RefSeq" id="XP_003856214.1">
    <property type="nucleotide sequence ID" value="XM_003856166.1"/>
</dbReference>
<dbReference type="SMR" id="F9WWF1"/>
<dbReference type="FunCoup" id="F9WWF1">
    <property type="interactions" value="439"/>
</dbReference>
<dbReference type="STRING" id="336722.F9WWF1"/>
<dbReference type="EnsemblFungi" id="Mycgr3T34236">
    <property type="protein sequence ID" value="Mycgr3P34236"/>
    <property type="gene ID" value="Mycgr3G34236"/>
</dbReference>
<dbReference type="GeneID" id="13403008"/>
<dbReference type="KEGG" id="ztr:MYCGRDRAFT_34236"/>
<dbReference type="eggNOG" id="KOG0777">
    <property type="taxonomic scope" value="Eukaryota"/>
</dbReference>
<dbReference type="HOGENOM" id="CLU_014015_6_0_1"/>
<dbReference type="InParanoid" id="F9WWF1"/>
<dbReference type="OMA" id="FCEDIGE"/>
<dbReference type="OrthoDB" id="6921389at2759"/>
<dbReference type="Proteomes" id="UP000008062">
    <property type="component" value="Chromosome 1"/>
</dbReference>
<dbReference type="GO" id="GO:0004337">
    <property type="term" value="F:(2E,6E)-farnesyl diphosphate synthase activity"/>
    <property type="evidence" value="ECO:0007669"/>
    <property type="project" value="UniProtKB-EC"/>
</dbReference>
<dbReference type="GO" id="GO:0004161">
    <property type="term" value="F:dimethylallyltranstransferase activity"/>
    <property type="evidence" value="ECO:0007669"/>
    <property type="project" value="UniProtKB-EC"/>
</dbReference>
<dbReference type="GO" id="GO:0004311">
    <property type="term" value="F:geranylgeranyl diphosphate synthase activity"/>
    <property type="evidence" value="ECO:0007669"/>
    <property type="project" value="UniProtKB-EC"/>
</dbReference>
<dbReference type="GO" id="GO:0046872">
    <property type="term" value="F:metal ion binding"/>
    <property type="evidence" value="ECO:0007669"/>
    <property type="project" value="UniProtKB-KW"/>
</dbReference>
<dbReference type="GO" id="GO:0046165">
    <property type="term" value="P:alcohol biosynthetic process"/>
    <property type="evidence" value="ECO:0007669"/>
    <property type="project" value="UniProtKB-ARBA"/>
</dbReference>
<dbReference type="GO" id="GO:0008299">
    <property type="term" value="P:isoprenoid biosynthetic process"/>
    <property type="evidence" value="ECO:0007669"/>
    <property type="project" value="InterPro"/>
</dbReference>
<dbReference type="GO" id="GO:0043386">
    <property type="term" value="P:mycotoxin biosynthetic process"/>
    <property type="evidence" value="ECO:0007669"/>
    <property type="project" value="UniProtKB-ARBA"/>
</dbReference>
<dbReference type="CDD" id="cd00685">
    <property type="entry name" value="Trans_IPPS_HT"/>
    <property type="match status" value="1"/>
</dbReference>
<dbReference type="Gene3D" id="1.10.600.10">
    <property type="entry name" value="Farnesyl Diphosphate Synthase"/>
    <property type="match status" value="1"/>
</dbReference>
<dbReference type="InterPro" id="IPR008949">
    <property type="entry name" value="Isoprenoid_synthase_dom_sf"/>
</dbReference>
<dbReference type="InterPro" id="IPR000092">
    <property type="entry name" value="Polyprenyl_synt"/>
</dbReference>
<dbReference type="InterPro" id="IPR033749">
    <property type="entry name" value="Polyprenyl_synt_CS"/>
</dbReference>
<dbReference type="PANTHER" id="PTHR12001">
    <property type="entry name" value="GERANYLGERANYL PYROPHOSPHATE SYNTHASE"/>
    <property type="match status" value="1"/>
</dbReference>
<dbReference type="PANTHER" id="PTHR12001:SF44">
    <property type="entry name" value="GERANYLGERANYL PYROPHOSPHATE SYNTHASE"/>
    <property type="match status" value="1"/>
</dbReference>
<dbReference type="Pfam" id="PF00348">
    <property type="entry name" value="polyprenyl_synt"/>
    <property type="match status" value="1"/>
</dbReference>
<dbReference type="SFLD" id="SFLDS00005">
    <property type="entry name" value="Isoprenoid_Synthase_Type_I"/>
    <property type="match status" value="1"/>
</dbReference>
<dbReference type="SUPFAM" id="SSF48576">
    <property type="entry name" value="Terpenoid synthases"/>
    <property type="match status" value="1"/>
</dbReference>
<dbReference type="PROSITE" id="PS00723">
    <property type="entry name" value="POLYPRENYL_SYNTHASE_1"/>
    <property type="match status" value="1"/>
</dbReference>
<dbReference type="PROSITE" id="PS00444">
    <property type="entry name" value="POLYPRENYL_SYNTHASE_2"/>
    <property type="match status" value="1"/>
</dbReference>
<feature type="chain" id="PRO_0000451067" description="Geranylgeranyl pyrophosphate synthase 2">
    <location>
        <begin position="1"/>
        <end position="332"/>
    </location>
</feature>
<feature type="binding site" evidence="1">
    <location>
        <position position="55"/>
    </location>
    <ligand>
        <name>isopentenyl diphosphate</name>
        <dbReference type="ChEBI" id="CHEBI:128769"/>
    </ligand>
</feature>
<feature type="binding site" evidence="1">
    <location>
        <position position="58"/>
    </location>
    <ligand>
        <name>isopentenyl diphosphate</name>
        <dbReference type="ChEBI" id="CHEBI:128769"/>
    </ligand>
</feature>
<feature type="binding site" evidence="1">
    <location>
        <position position="87"/>
    </location>
    <ligand>
        <name>isopentenyl diphosphate</name>
        <dbReference type="ChEBI" id="CHEBI:128769"/>
    </ligand>
</feature>
<feature type="binding site" evidence="1">
    <location>
        <position position="94"/>
    </location>
    <ligand>
        <name>Mg(2+)</name>
        <dbReference type="ChEBI" id="CHEBI:18420"/>
        <label>1</label>
    </ligand>
</feature>
<feature type="binding site" evidence="1">
    <location>
        <position position="94"/>
    </location>
    <ligand>
        <name>Mg(2+)</name>
        <dbReference type="ChEBI" id="CHEBI:18420"/>
        <label>2</label>
    </ligand>
</feature>
<feature type="binding site" evidence="1">
    <location>
        <position position="98"/>
    </location>
    <ligand>
        <name>Mg(2+)</name>
        <dbReference type="ChEBI" id="CHEBI:18420"/>
        <label>1</label>
    </ligand>
</feature>
<feature type="binding site" evidence="1">
    <location>
        <position position="98"/>
    </location>
    <ligand>
        <name>Mg(2+)</name>
        <dbReference type="ChEBI" id="CHEBI:18420"/>
        <label>2</label>
    </ligand>
</feature>
<feature type="binding site" evidence="1">
    <location>
        <position position="103"/>
    </location>
    <ligand>
        <name>dimethylallyl diphosphate</name>
        <dbReference type="ChEBI" id="CHEBI:57623"/>
    </ligand>
</feature>
<feature type="binding site" evidence="1">
    <location>
        <position position="104"/>
    </location>
    <ligand>
        <name>isopentenyl diphosphate</name>
        <dbReference type="ChEBI" id="CHEBI:128769"/>
    </ligand>
</feature>
<feature type="binding site" evidence="1">
    <location>
        <position position="181"/>
    </location>
    <ligand>
        <name>dimethylallyl diphosphate</name>
        <dbReference type="ChEBI" id="CHEBI:57623"/>
    </ligand>
</feature>
<feature type="binding site" evidence="1">
    <location>
        <position position="182"/>
    </location>
    <ligand>
        <name>dimethylallyl diphosphate</name>
        <dbReference type="ChEBI" id="CHEBI:57623"/>
    </ligand>
</feature>
<feature type="binding site" evidence="1">
    <location>
        <position position="218"/>
    </location>
    <ligand>
        <name>dimethylallyl diphosphate</name>
        <dbReference type="ChEBI" id="CHEBI:57623"/>
    </ligand>
</feature>
<feature type="binding site" evidence="1">
    <location>
        <position position="221"/>
    </location>
    <ligand>
        <name>Mg(2+)</name>
        <dbReference type="ChEBI" id="CHEBI:18420"/>
        <label>3</label>
    </ligand>
</feature>
<feature type="binding site" evidence="1">
    <location>
        <position position="225"/>
    </location>
    <ligand>
        <name>dimethylallyl diphosphate</name>
        <dbReference type="ChEBI" id="CHEBI:57623"/>
    </ligand>
</feature>
<feature type="binding site" evidence="1">
    <location>
        <position position="235"/>
    </location>
    <ligand>
        <name>dimethylallyl diphosphate</name>
        <dbReference type="ChEBI" id="CHEBI:57623"/>
    </ligand>
</feature>
<feature type="binding site" evidence="1">
    <location>
        <position position="245"/>
    </location>
    <ligand>
        <name>dimethylallyl diphosphate</name>
        <dbReference type="ChEBI" id="CHEBI:57623"/>
    </ligand>
</feature>
<feature type="site" description="Important for determining product chain length" evidence="1">
    <location>
        <position position="126"/>
    </location>
</feature>
<sequence length="332" mass="36759">MLDVRGSLPGQVNTGTISPYRRIDRSNDTIGTSDLAADEQVLLGPFNHLDARPGKEIRSQLIDAFDSWLQVPTASLAVIKNVVRMLHNASLLIDDIQDNSELRRGAPAAHHAFGTAQTINSANYVYFRALRELSTLHNPVMVQIYTAELLNLHHGQGMDLFWRETGTCPTESRYLEMVGNKTGGLFRLAIRCMCVEGSPKQSSADYIRLATMIGILFQILDDFRNLTDGSYTSSKGFCEDLTEGKFSFPIVHAIRSNPGDSFLHDILRQHTDDPAVKKEAVSYLERCGSLIYTQGVIHQLAGDVLTLADEVDAGQGRAQALKDIVQRLMVKL</sequence>
<proteinExistence type="inferred from homology"/>
<organism>
    <name type="scientific">Zymoseptoria tritici (strain CBS 115943 / IPO323)</name>
    <name type="common">Speckled leaf blotch fungus</name>
    <name type="synonym">Septoria tritici</name>
    <dbReference type="NCBI Taxonomy" id="336722"/>
    <lineage>
        <taxon>Eukaryota</taxon>
        <taxon>Fungi</taxon>
        <taxon>Dikarya</taxon>
        <taxon>Ascomycota</taxon>
        <taxon>Pezizomycotina</taxon>
        <taxon>Dothideomycetes</taxon>
        <taxon>Dothideomycetidae</taxon>
        <taxon>Mycosphaerellales</taxon>
        <taxon>Mycosphaerellaceae</taxon>
        <taxon>Zymoseptoria</taxon>
    </lineage>
</organism>
<protein>
    <recommendedName>
        <fullName evidence="3">Geranylgeranyl pyrophosphate synthase 2</fullName>
        <shortName evidence="3">GGPP synthase 2</shortName>
        <shortName evidence="3">GGPPSase 2</shortName>
        <ecNumber evidence="5">2.5.1.-</ecNumber>
    </recommendedName>
    <alternativeName>
        <fullName evidence="1">(2E,6E)-farnesyl diphosphate synthase</fullName>
    </alternativeName>
    <alternativeName>
        <fullName evidence="1">Dimethylallyltranstransferase</fullName>
        <ecNumber evidence="1">2.5.1.1</ecNumber>
    </alternativeName>
    <alternativeName>
        <fullName evidence="1">Farnesyl diphosphate synthase</fullName>
    </alternativeName>
    <alternativeName>
        <fullName evidence="1">Farnesyltranstransferase</fullName>
        <ecNumber evidence="1">2.5.1.29</ecNumber>
    </alternativeName>
    <alternativeName>
        <fullName evidence="1">Geranylgeranyl diphosphate synthase</fullName>
    </alternativeName>
    <alternativeName>
        <fullName evidence="1">Geranyltranstransferase</fullName>
        <ecNumber evidence="1">2.5.1.10</ecNumber>
    </alternativeName>
</protein>
<evidence type="ECO:0000250" key="1">
    <source>
        <dbReference type="UniProtKB" id="Q12051"/>
    </source>
</evidence>
<evidence type="ECO:0000269" key="2">
    <source>
    </source>
</evidence>
<evidence type="ECO:0000303" key="3">
    <source>
    </source>
</evidence>
<evidence type="ECO:0000305" key="4"/>
<evidence type="ECO:0000305" key="5">
    <source>
    </source>
</evidence>
<gene>
    <name type="primary">GGS2</name>
    <name type="ORF">MYCGRDRAFT_34236</name>
</gene>
<name>GGS2_ZYMTI</name>
<keyword id="KW-0460">Magnesium</keyword>
<keyword id="KW-0479">Metal-binding</keyword>
<keyword id="KW-1185">Reference proteome</keyword>
<keyword id="KW-0808">Transferase</keyword>